<gene>
    <name evidence="1" type="primary">ftsB</name>
    <name type="ordered locus">XCC1701</name>
</gene>
<feature type="chain" id="PRO_0000214462" description="Cell division protein FtsB">
    <location>
        <begin position="1"/>
        <end position="121"/>
    </location>
</feature>
<feature type="topological domain" description="Cytoplasmic" evidence="1">
    <location>
        <begin position="1"/>
        <end position="6"/>
    </location>
</feature>
<feature type="transmembrane region" description="Helical" evidence="1">
    <location>
        <begin position="7"/>
        <end position="24"/>
    </location>
</feature>
<feature type="topological domain" description="Periplasmic" evidence="1">
    <location>
        <begin position="25"/>
        <end position="121"/>
    </location>
</feature>
<feature type="region of interest" description="Disordered" evidence="2">
    <location>
        <begin position="98"/>
        <end position="121"/>
    </location>
</feature>
<feature type="coiled-coil region" evidence="1">
    <location>
        <begin position="31"/>
        <end position="66"/>
    </location>
</feature>
<evidence type="ECO:0000255" key="1">
    <source>
        <dbReference type="HAMAP-Rule" id="MF_00599"/>
    </source>
</evidence>
<evidence type="ECO:0000256" key="2">
    <source>
        <dbReference type="SAM" id="MobiDB-lite"/>
    </source>
</evidence>
<dbReference type="EMBL" id="AE008922">
    <property type="protein sequence ID" value="AAM40995.1"/>
    <property type="molecule type" value="Genomic_DNA"/>
</dbReference>
<dbReference type="RefSeq" id="NP_637071.1">
    <property type="nucleotide sequence ID" value="NC_003902.1"/>
</dbReference>
<dbReference type="RefSeq" id="WP_011036878.1">
    <property type="nucleotide sequence ID" value="NC_003902.1"/>
</dbReference>
<dbReference type="SMR" id="Q8P9Z2"/>
<dbReference type="STRING" id="190485.XCC1701"/>
<dbReference type="EnsemblBacteria" id="AAM40995">
    <property type="protein sequence ID" value="AAM40995"/>
    <property type="gene ID" value="XCC1701"/>
</dbReference>
<dbReference type="KEGG" id="xcc:XCC1701"/>
<dbReference type="PATRIC" id="fig|190485.4.peg.1813"/>
<dbReference type="eggNOG" id="COG2919">
    <property type="taxonomic scope" value="Bacteria"/>
</dbReference>
<dbReference type="HOGENOM" id="CLU_134863_5_0_6"/>
<dbReference type="OrthoDB" id="7061211at2"/>
<dbReference type="Proteomes" id="UP000001010">
    <property type="component" value="Chromosome"/>
</dbReference>
<dbReference type="GO" id="GO:0032153">
    <property type="term" value="C:cell division site"/>
    <property type="evidence" value="ECO:0007669"/>
    <property type="project" value="UniProtKB-UniRule"/>
</dbReference>
<dbReference type="GO" id="GO:0030428">
    <property type="term" value="C:cell septum"/>
    <property type="evidence" value="ECO:0000318"/>
    <property type="project" value="GO_Central"/>
</dbReference>
<dbReference type="GO" id="GO:0005886">
    <property type="term" value="C:plasma membrane"/>
    <property type="evidence" value="ECO:0007669"/>
    <property type="project" value="UniProtKB-SubCell"/>
</dbReference>
<dbReference type="GO" id="GO:0043093">
    <property type="term" value="P:FtsZ-dependent cytokinesis"/>
    <property type="evidence" value="ECO:0000318"/>
    <property type="project" value="GO_Central"/>
</dbReference>
<dbReference type="HAMAP" id="MF_00599">
    <property type="entry name" value="FtsB"/>
    <property type="match status" value="1"/>
</dbReference>
<dbReference type="InterPro" id="IPR023081">
    <property type="entry name" value="Cell_div_FtsB"/>
</dbReference>
<dbReference type="InterPro" id="IPR007060">
    <property type="entry name" value="FtsL/DivIC"/>
</dbReference>
<dbReference type="NCBIfam" id="NF002058">
    <property type="entry name" value="PRK00888.1"/>
    <property type="match status" value="1"/>
</dbReference>
<dbReference type="PANTHER" id="PTHR37485">
    <property type="entry name" value="CELL DIVISION PROTEIN FTSB"/>
    <property type="match status" value="1"/>
</dbReference>
<dbReference type="PANTHER" id="PTHR37485:SF1">
    <property type="entry name" value="CELL DIVISION PROTEIN FTSB"/>
    <property type="match status" value="1"/>
</dbReference>
<dbReference type="Pfam" id="PF04977">
    <property type="entry name" value="DivIC"/>
    <property type="match status" value="1"/>
</dbReference>
<sequence length="121" mass="13469">MRNWRWLLLVLAVLLAWLQYRFWFGPGNSGEVMMLEAQVAHQTRDNEGLRQRNQALAAEVKDLKDGEAAIEERARSELGMIKPGETFYRVVEDAPLLPPAAQEAAPPAQPPAASADPVDHP</sequence>
<name>FTSB_XANCP</name>
<accession>Q8P9Z2</accession>
<comment type="function">
    <text evidence="1">Essential cell division protein. May link together the upstream cell division proteins, which are predominantly cytoplasmic, with the downstream cell division proteins, which are predominantly periplasmic.</text>
</comment>
<comment type="subunit">
    <text evidence="1">Part of a complex composed of FtsB, FtsL and FtsQ.</text>
</comment>
<comment type="subcellular location">
    <subcellularLocation>
        <location evidence="1">Cell inner membrane</location>
        <topology evidence="1">Single-pass type II membrane protein</topology>
    </subcellularLocation>
    <text evidence="1">Localizes to the division septum.</text>
</comment>
<comment type="similarity">
    <text evidence="1">Belongs to the FtsB family.</text>
</comment>
<reference key="1">
    <citation type="journal article" date="2002" name="Nature">
        <title>Comparison of the genomes of two Xanthomonas pathogens with differing host specificities.</title>
        <authorList>
            <person name="da Silva A.C.R."/>
            <person name="Ferro J.A."/>
            <person name="Reinach F.C."/>
            <person name="Farah C.S."/>
            <person name="Furlan L.R."/>
            <person name="Quaggio R.B."/>
            <person name="Monteiro-Vitorello C.B."/>
            <person name="Van Sluys M.A."/>
            <person name="Almeida N.F. Jr."/>
            <person name="Alves L.M.C."/>
            <person name="do Amaral A.M."/>
            <person name="Bertolini M.C."/>
            <person name="Camargo L.E.A."/>
            <person name="Camarotte G."/>
            <person name="Cannavan F."/>
            <person name="Cardozo J."/>
            <person name="Chambergo F."/>
            <person name="Ciapina L.P."/>
            <person name="Cicarelli R.M.B."/>
            <person name="Coutinho L.L."/>
            <person name="Cursino-Santos J.R."/>
            <person name="El-Dorry H."/>
            <person name="Faria J.B."/>
            <person name="Ferreira A.J.S."/>
            <person name="Ferreira R.C.C."/>
            <person name="Ferro M.I.T."/>
            <person name="Formighieri E.F."/>
            <person name="Franco M.C."/>
            <person name="Greggio C.C."/>
            <person name="Gruber A."/>
            <person name="Katsuyama A.M."/>
            <person name="Kishi L.T."/>
            <person name="Leite R.P."/>
            <person name="Lemos E.G.M."/>
            <person name="Lemos M.V.F."/>
            <person name="Locali E.C."/>
            <person name="Machado M.A."/>
            <person name="Madeira A.M.B.N."/>
            <person name="Martinez-Rossi N.M."/>
            <person name="Martins E.C."/>
            <person name="Meidanis J."/>
            <person name="Menck C.F.M."/>
            <person name="Miyaki C.Y."/>
            <person name="Moon D.H."/>
            <person name="Moreira L.M."/>
            <person name="Novo M.T.M."/>
            <person name="Okura V.K."/>
            <person name="Oliveira M.C."/>
            <person name="Oliveira V.R."/>
            <person name="Pereira H.A."/>
            <person name="Rossi A."/>
            <person name="Sena J.A.D."/>
            <person name="Silva C."/>
            <person name="de Souza R.F."/>
            <person name="Spinola L.A.F."/>
            <person name="Takita M.A."/>
            <person name="Tamura R.E."/>
            <person name="Teixeira E.C."/>
            <person name="Tezza R.I.D."/>
            <person name="Trindade dos Santos M."/>
            <person name="Truffi D."/>
            <person name="Tsai S.M."/>
            <person name="White F.F."/>
            <person name="Setubal J.C."/>
            <person name="Kitajima J.P."/>
        </authorList>
    </citation>
    <scope>NUCLEOTIDE SEQUENCE [LARGE SCALE GENOMIC DNA]</scope>
    <source>
        <strain>ATCC 33913 / DSM 3586 / NCPPB 528 / LMG 568 / P 25</strain>
    </source>
</reference>
<proteinExistence type="inferred from homology"/>
<organism>
    <name type="scientific">Xanthomonas campestris pv. campestris (strain ATCC 33913 / DSM 3586 / NCPPB 528 / LMG 568 / P 25)</name>
    <dbReference type="NCBI Taxonomy" id="190485"/>
    <lineage>
        <taxon>Bacteria</taxon>
        <taxon>Pseudomonadati</taxon>
        <taxon>Pseudomonadota</taxon>
        <taxon>Gammaproteobacteria</taxon>
        <taxon>Lysobacterales</taxon>
        <taxon>Lysobacteraceae</taxon>
        <taxon>Xanthomonas</taxon>
    </lineage>
</organism>
<protein>
    <recommendedName>
        <fullName evidence="1">Cell division protein FtsB</fullName>
    </recommendedName>
</protein>
<keyword id="KW-0131">Cell cycle</keyword>
<keyword id="KW-0132">Cell division</keyword>
<keyword id="KW-0997">Cell inner membrane</keyword>
<keyword id="KW-1003">Cell membrane</keyword>
<keyword id="KW-0175">Coiled coil</keyword>
<keyword id="KW-0472">Membrane</keyword>
<keyword id="KW-1185">Reference proteome</keyword>
<keyword id="KW-0812">Transmembrane</keyword>
<keyword id="KW-1133">Transmembrane helix</keyword>